<comment type="function">
    <text evidence="1">Has flap endonuclease activity. During DNA replication, flap endonucleases cleave the 5'-overhanging flap structure that is generated by displacement synthesis when DNA polymerase encounters the 5'-end of a downstream Okazaki fragment.</text>
</comment>
<comment type="cofactor">
    <cofactor evidence="1">
        <name>Mg(2+)</name>
        <dbReference type="ChEBI" id="CHEBI:18420"/>
    </cofactor>
    <text evidence="1">Binds 2 Mg(2+) per subunit. Only one magnesium ion has a direct interaction with the protein, the other interactions are indirect.</text>
</comment>
<comment type="cofactor">
    <cofactor evidence="1">
        <name>K(+)</name>
        <dbReference type="ChEBI" id="CHEBI:29103"/>
    </cofactor>
    <text evidence="1">Binds 1 K(+) per subunit. The potassium ion strongly increases the affinity for DNA.</text>
</comment>
<comment type="similarity">
    <text evidence="1">Belongs to the Xni family.</text>
</comment>
<proteinExistence type="inferred from homology"/>
<keyword id="KW-0238">DNA-binding</keyword>
<keyword id="KW-0255">Endonuclease</keyword>
<keyword id="KW-0378">Hydrolase</keyword>
<keyword id="KW-0460">Magnesium</keyword>
<keyword id="KW-0479">Metal-binding</keyword>
<keyword id="KW-0540">Nuclease</keyword>
<keyword id="KW-0630">Potassium</keyword>
<keyword id="KW-1185">Reference proteome</keyword>
<name>XNI_YERPE</name>
<gene>
    <name evidence="1" type="primary">xni</name>
    <name evidence="1" type="synonym">ygdG</name>
    <name type="ordered locus">YPO1032</name>
    <name type="ordered locus">y3151</name>
    <name type="ordered locus">YP_2819</name>
</gene>
<feature type="chain" id="PRO_0000297893" description="Flap endonuclease Xni">
    <location>
        <begin position="1"/>
        <end position="251"/>
    </location>
</feature>
<feature type="domain" description="5'-3' exonuclease" evidence="1">
    <location>
        <begin position="160"/>
        <end position="250"/>
    </location>
</feature>
<feature type="region of interest" description="Interaction with DNA" evidence="1">
    <location>
        <begin position="184"/>
        <end position="189"/>
    </location>
</feature>
<feature type="binding site" evidence="1">
    <location>
        <position position="104"/>
    </location>
    <ligand>
        <name>Mg(2+)</name>
        <dbReference type="ChEBI" id="CHEBI:18420"/>
    </ligand>
</feature>
<feature type="binding site" evidence="1">
    <location>
        <position position="171"/>
    </location>
    <ligand>
        <name>K(+)</name>
        <dbReference type="ChEBI" id="CHEBI:29103"/>
    </ligand>
</feature>
<feature type="binding site" evidence="1">
    <location>
        <position position="172"/>
    </location>
    <ligand>
        <name>K(+)</name>
        <dbReference type="ChEBI" id="CHEBI:29103"/>
    </ligand>
</feature>
<feature type="binding site" evidence="1">
    <location>
        <position position="180"/>
    </location>
    <ligand>
        <name>K(+)</name>
        <dbReference type="ChEBI" id="CHEBI:29103"/>
    </ligand>
</feature>
<feature type="binding site" evidence="1">
    <location>
        <position position="182"/>
    </location>
    <ligand>
        <name>K(+)</name>
        <dbReference type="ChEBI" id="CHEBI:29103"/>
    </ligand>
</feature>
<feature type="binding site" evidence="1">
    <location>
        <position position="185"/>
    </location>
    <ligand>
        <name>K(+)</name>
        <dbReference type="ChEBI" id="CHEBI:29103"/>
    </ligand>
</feature>
<accession>Q7CH07</accession>
<accession>Q74S38</accession>
<evidence type="ECO:0000255" key="1">
    <source>
        <dbReference type="HAMAP-Rule" id="MF_01192"/>
    </source>
</evidence>
<reference key="1">
    <citation type="journal article" date="2002" name="J. Bacteriol.">
        <title>Genome sequence of Yersinia pestis KIM.</title>
        <authorList>
            <person name="Deng W."/>
            <person name="Burland V."/>
            <person name="Plunkett G. III"/>
            <person name="Boutin A."/>
            <person name="Mayhew G.F."/>
            <person name="Liss P."/>
            <person name="Perna N.T."/>
            <person name="Rose D.J."/>
            <person name="Mau B."/>
            <person name="Zhou S."/>
            <person name="Schwartz D.C."/>
            <person name="Fetherston J.D."/>
            <person name="Lindler L.E."/>
            <person name="Brubaker R.R."/>
            <person name="Plano G.V."/>
            <person name="Straley S.C."/>
            <person name="McDonough K.A."/>
            <person name="Nilles M.L."/>
            <person name="Matson J.S."/>
            <person name="Blattner F.R."/>
            <person name="Perry R.D."/>
        </authorList>
    </citation>
    <scope>NUCLEOTIDE SEQUENCE [LARGE SCALE GENOMIC DNA]</scope>
    <source>
        <strain>KIM10+ / Biovar Mediaevalis</strain>
    </source>
</reference>
<reference key="2">
    <citation type="journal article" date="2001" name="Nature">
        <title>Genome sequence of Yersinia pestis, the causative agent of plague.</title>
        <authorList>
            <person name="Parkhill J."/>
            <person name="Wren B.W."/>
            <person name="Thomson N.R."/>
            <person name="Titball R.W."/>
            <person name="Holden M.T.G."/>
            <person name="Prentice M.B."/>
            <person name="Sebaihia M."/>
            <person name="James K.D."/>
            <person name="Churcher C.M."/>
            <person name="Mungall K.L."/>
            <person name="Baker S."/>
            <person name="Basham D."/>
            <person name="Bentley S.D."/>
            <person name="Brooks K."/>
            <person name="Cerdeno-Tarraga A.-M."/>
            <person name="Chillingworth T."/>
            <person name="Cronin A."/>
            <person name="Davies R.M."/>
            <person name="Davis P."/>
            <person name="Dougan G."/>
            <person name="Feltwell T."/>
            <person name="Hamlin N."/>
            <person name="Holroyd S."/>
            <person name="Jagels K."/>
            <person name="Karlyshev A.V."/>
            <person name="Leather S."/>
            <person name="Moule S."/>
            <person name="Oyston P.C.F."/>
            <person name="Quail M.A."/>
            <person name="Rutherford K.M."/>
            <person name="Simmonds M."/>
            <person name="Skelton J."/>
            <person name="Stevens K."/>
            <person name="Whitehead S."/>
            <person name="Barrell B.G."/>
        </authorList>
    </citation>
    <scope>NUCLEOTIDE SEQUENCE [LARGE SCALE GENOMIC DNA]</scope>
    <source>
        <strain>CO-92 / Biovar Orientalis</strain>
    </source>
</reference>
<reference key="3">
    <citation type="journal article" date="2004" name="DNA Res.">
        <title>Complete genome sequence of Yersinia pestis strain 91001, an isolate avirulent to humans.</title>
        <authorList>
            <person name="Song Y."/>
            <person name="Tong Z."/>
            <person name="Wang J."/>
            <person name="Wang L."/>
            <person name="Guo Z."/>
            <person name="Han Y."/>
            <person name="Zhang J."/>
            <person name="Pei D."/>
            <person name="Zhou D."/>
            <person name="Qin H."/>
            <person name="Pang X."/>
            <person name="Han Y."/>
            <person name="Zhai J."/>
            <person name="Li M."/>
            <person name="Cui B."/>
            <person name="Qi Z."/>
            <person name="Jin L."/>
            <person name="Dai R."/>
            <person name="Chen F."/>
            <person name="Li S."/>
            <person name="Ye C."/>
            <person name="Du Z."/>
            <person name="Lin W."/>
            <person name="Wang J."/>
            <person name="Yu J."/>
            <person name="Yang H."/>
            <person name="Wang J."/>
            <person name="Huang P."/>
            <person name="Yang R."/>
        </authorList>
    </citation>
    <scope>NUCLEOTIDE SEQUENCE [LARGE SCALE GENOMIC DNA]</scope>
    <source>
        <strain>91001 / Biovar Mediaevalis</strain>
    </source>
</reference>
<sequence length="251" mass="28161">MQIHLLIVDALNLIRRIHAVQGSPCVKACQHALQQLIQHSQPSHAVAVFDEDDRSDSWRHQCLPDYKAGRSPMPDNLQQEMPLIRQAFNELGVACWHSPGNEADDLAATLVVKVAGAGHQVTIVSTDKGYCQLLAPNIQIRDYFQKRWLDMPFVKQEFGVLPRQLPDYWGLAGISSSKIPGVAGVGAKTATLLLQQADTLEVLYQNLESIPEKWRKKLQQHQQMAFTCKQIATLKTDLLLSGNLQQLRLKK</sequence>
<protein>
    <recommendedName>
        <fullName evidence="1">Flap endonuclease Xni</fullName>
        <shortName evidence="1">FEN</shortName>
        <ecNumber evidence="1">3.1.-.-</ecNumber>
    </recommendedName>
</protein>
<dbReference type="EC" id="3.1.-.-" evidence="1"/>
<dbReference type="EMBL" id="AE009952">
    <property type="protein sequence ID" value="AAM86701.1"/>
    <property type="molecule type" value="Genomic_DNA"/>
</dbReference>
<dbReference type="EMBL" id="AE017042">
    <property type="protein sequence ID" value="AAS63003.1"/>
    <property type="molecule type" value="Genomic_DNA"/>
</dbReference>
<dbReference type="EMBL" id="AL590842">
    <property type="protein sequence ID" value="CAL19697.1"/>
    <property type="molecule type" value="Genomic_DNA"/>
</dbReference>
<dbReference type="PIR" id="AG0126">
    <property type="entry name" value="AG0126"/>
</dbReference>
<dbReference type="RefSeq" id="WP_002215970.1">
    <property type="nucleotide sequence ID" value="NZ_WUCM01000007.1"/>
</dbReference>
<dbReference type="RefSeq" id="YP_002346075.1">
    <property type="nucleotide sequence ID" value="NC_003143.1"/>
</dbReference>
<dbReference type="SMR" id="Q7CH07"/>
<dbReference type="STRING" id="214092.YPO1032"/>
<dbReference type="PaxDb" id="214092-YPO1032"/>
<dbReference type="DNASU" id="1148098"/>
<dbReference type="EnsemblBacteria" id="AAS63003">
    <property type="protein sequence ID" value="AAS63003"/>
    <property type="gene ID" value="YP_2819"/>
</dbReference>
<dbReference type="GeneID" id="57977529"/>
<dbReference type="KEGG" id="ype:YPO1032"/>
<dbReference type="KEGG" id="ypk:y3151"/>
<dbReference type="KEGG" id="ypm:YP_2819"/>
<dbReference type="PATRIC" id="fig|214092.21.peg.1320"/>
<dbReference type="eggNOG" id="COG0258">
    <property type="taxonomic scope" value="Bacteria"/>
</dbReference>
<dbReference type="HOGENOM" id="CLU_004675_1_2_6"/>
<dbReference type="OMA" id="WRVDLIP"/>
<dbReference type="OrthoDB" id="8070997at2"/>
<dbReference type="Proteomes" id="UP000000815">
    <property type="component" value="Chromosome"/>
</dbReference>
<dbReference type="Proteomes" id="UP000001019">
    <property type="component" value="Chromosome"/>
</dbReference>
<dbReference type="Proteomes" id="UP000002490">
    <property type="component" value="Chromosome"/>
</dbReference>
<dbReference type="GO" id="GO:0008409">
    <property type="term" value="F:5'-3' exonuclease activity"/>
    <property type="evidence" value="ECO:0007669"/>
    <property type="project" value="InterPro"/>
</dbReference>
<dbReference type="GO" id="GO:0017108">
    <property type="term" value="F:5'-flap endonuclease activity"/>
    <property type="evidence" value="ECO:0000318"/>
    <property type="project" value="GO_Central"/>
</dbReference>
<dbReference type="GO" id="GO:0003677">
    <property type="term" value="F:DNA binding"/>
    <property type="evidence" value="ECO:0007669"/>
    <property type="project" value="UniProtKB-UniRule"/>
</dbReference>
<dbReference type="GO" id="GO:0000287">
    <property type="term" value="F:magnesium ion binding"/>
    <property type="evidence" value="ECO:0007669"/>
    <property type="project" value="UniProtKB-UniRule"/>
</dbReference>
<dbReference type="GO" id="GO:0030955">
    <property type="term" value="F:potassium ion binding"/>
    <property type="evidence" value="ECO:0007669"/>
    <property type="project" value="UniProtKB-UniRule"/>
</dbReference>
<dbReference type="GO" id="GO:0033567">
    <property type="term" value="P:DNA replication, Okazaki fragment processing"/>
    <property type="evidence" value="ECO:0000318"/>
    <property type="project" value="GO_Central"/>
</dbReference>
<dbReference type="CDD" id="cd09898">
    <property type="entry name" value="H3TH_53EXO"/>
    <property type="match status" value="1"/>
</dbReference>
<dbReference type="CDD" id="cd09859">
    <property type="entry name" value="PIN_53EXO"/>
    <property type="match status" value="1"/>
</dbReference>
<dbReference type="FunFam" id="1.10.150.20:FF:000003">
    <property type="entry name" value="DNA polymerase I"/>
    <property type="match status" value="1"/>
</dbReference>
<dbReference type="FunFam" id="3.40.50.1010:FF:000011">
    <property type="entry name" value="Flap endonuclease Xni"/>
    <property type="match status" value="1"/>
</dbReference>
<dbReference type="Gene3D" id="1.10.150.20">
    <property type="entry name" value="5' to 3' exonuclease, C-terminal subdomain"/>
    <property type="match status" value="1"/>
</dbReference>
<dbReference type="Gene3D" id="3.40.50.1010">
    <property type="entry name" value="5'-nuclease"/>
    <property type="match status" value="1"/>
</dbReference>
<dbReference type="HAMAP" id="MF_01192">
    <property type="entry name" value="Xni"/>
    <property type="match status" value="1"/>
</dbReference>
<dbReference type="InterPro" id="IPR020046">
    <property type="entry name" value="5-3_exonucl_a-hlix_arch_N"/>
</dbReference>
<dbReference type="InterPro" id="IPR002421">
    <property type="entry name" value="5-3_exonuclease"/>
</dbReference>
<dbReference type="InterPro" id="IPR036279">
    <property type="entry name" value="5-3_exonuclease_C_sf"/>
</dbReference>
<dbReference type="InterPro" id="IPR020045">
    <property type="entry name" value="DNA_polI_H3TH"/>
</dbReference>
<dbReference type="InterPro" id="IPR038969">
    <property type="entry name" value="FEN"/>
</dbReference>
<dbReference type="InterPro" id="IPR008918">
    <property type="entry name" value="HhH2"/>
</dbReference>
<dbReference type="InterPro" id="IPR029060">
    <property type="entry name" value="PIN-like_dom_sf"/>
</dbReference>
<dbReference type="InterPro" id="IPR022895">
    <property type="entry name" value="Xni"/>
</dbReference>
<dbReference type="NCBIfam" id="NF007017">
    <property type="entry name" value="PRK09482.1"/>
    <property type="match status" value="1"/>
</dbReference>
<dbReference type="PANTHER" id="PTHR42646:SF2">
    <property type="entry name" value="5'-3' EXONUCLEASE FAMILY PROTEIN"/>
    <property type="match status" value="1"/>
</dbReference>
<dbReference type="PANTHER" id="PTHR42646">
    <property type="entry name" value="FLAP ENDONUCLEASE XNI"/>
    <property type="match status" value="1"/>
</dbReference>
<dbReference type="Pfam" id="PF01367">
    <property type="entry name" value="5_3_exonuc"/>
    <property type="match status" value="1"/>
</dbReference>
<dbReference type="Pfam" id="PF02739">
    <property type="entry name" value="5_3_exonuc_N"/>
    <property type="match status" value="1"/>
</dbReference>
<dbReference type="SMART" id="SM00475">
    <property type="entry name" value="53EXOc"/>
    <property type="match status" value="1"/>
</dbReference>
<dbReference type="SMART" id="SM00279">
    <property type="entry name" value="HhH2"/>
    <property type="match status" value="1"/>
</dbReference>
<dbReference type="SUPFAM" id="SSF47807">
    <property type="entry name" value="5' to 3' exonuclease, C-terminal subdomain"/>
    <property type="match status" value="1"/>
</dbReference>
<dbReference type="SUPFAM" id="SSF88723">
    <property type="entry name" value="PIN domain-like"/>
    <property type="match status" value="1"/>
</dbReference>
<organism>
    <name type="scientific">Yersinia pestis</name>
    <dbReference type="NCBI Taxonomy" id="632"/>
    <lineage>
        <taxon>Bacteria</taxon>
        <taxon>Pseudomonadati</taxon>
        <taxon>Pseudomonadota</taxon>
        <taxon>Gammaproteobacteria</taxon>
        <taxon>Enterobacterales</taxon>
        <taxon>Yersiniaceae</taxon>
        <taxon>Yersinia</taxon>
    </lineage>
</organism>